<keyword id="KW-0067">ATP-binding</keyword>
<keyword id="KW-0173">Coenzyme A biosynthesis</keyword>
<keyword id="KW-0963">Cytoplasm</keyword>
<keyword id="KW-0460">Magnesium</keyword>
<keyword id="KW-0547">Nucleotide-binding</keyword>
<keyword id="KW-0548">Nucleotidyltransferase</keyword>
<keyword id="KW-0808">Transferase</keyword>
<accession>Q8E6R1</accession>
<name>COAD_STRA3</name>
<feature type="chain" id="PRO_0000156279" description="Phosphopantetheine adenylyltransferase">
    <location>
        <begin position="1"/>
        <end position="161"/>
    </location>
</feature>
<feature type="binding site" evidence="1">
    <location>
        <begin position="10"/>
        <end position="11"/>
    </location>
    <ligand>
        <name>ATP</name>
        <dbReference type="ChEBI" id="CHEBI:30616"/>
    </ligand>
</feature>
<feature type="binding site" evidence="1">
    <location>
        <position position="10"/>
    </location>
    <ligand>
        <name>substrate</name>
    </ligand>
</feature>
<feature type="binding site" evidence="1">
    <location>
        <position position="18"/>
    </location>
    <ligand>
        <name>ATP</name>
        <dbReference type="ChEBI" id="CHEBI:30616"/>
    </ligand>
</feature>
<feature type="binding site" evidence="1">
    <location>
        <position position="42"/>
    </location>
    <ligand>
        <name>substrate</name>
    </ligand>
</feature>
<feature type="binding site" evidence="1">
    <location>
        <position position="75"/>
    </location>
    <ligand>
        <name>substrate</name>
    </ligand>
</feature>
<feature type="binding site" evidence="1">
    <location>
        <position position="89"/>
    </location>
    <ligand>
        <name>substrate</name>
    </ligand>
</feature>
<feature type="binding site" evidence="1">
    <location>
        <begin position="90"/>
        <end position="92"/>
    </location>
    <ligand>
        <name>ATP</name>
        <dbReference type="ChEBI" id="CHEBI:30616"/>
    </ligand>
</feature>
<feature type="binding site" evidence="1">
    <location>
        <position position="100"/>
    </location>
    <ligand>
        <name>ATP</name>
        <dbReference type="ChEBI" id="CHEBI:30616"/>
    </ligand>
</feature>
<feature type="binding site" evidence="1">
    <location>
        <begin position="125"/>
        <end position="131"/>
    </location>
    <ligand>
        <name>ATP</name>
        <dbReference type="ChEBI" id="CHEBI:30616"/>
    </ligand>
</feature>
<feature type="site" description="Transition state stabilizer" evidence="1">
    <location>
        <position position="18"/>
    </location>
</feature>
<evidence type="ECO:0000255" key="1">
    <source>
        <dbReference type="HAMAP-Rule" id="MF_00151"/>
    </source>
</evidence>
<comment type="function">
    <text evidence="1">Reversibly transfers an adenylyl group from ATP to 4'-phosphopantetheine, yielding dephospho-CoA (dPCoA) and pyrophosphate.</text>
</comment>
<comment type="catalytic activity">
    <reaction evidence="1">
        <text>(R)-4'-phosphopantetheine + ATP + H(+) = 3'-dephospho-CoA + diphosphate</text>
        <dbReference type="Rhea" id="RHEA:19801"/>
        <dbReference type="ChEBI" id="CHEBI:15378"/>
        <dbReference type="ChEBI" id="CHEBI:30616"/>
        <dbReference type="ChEBI" id="CHEBI:33019"/>
        <dbReference type="ChEBI" id="CHEBI:57328"/>
        <dbReference type="ChEBI" id="CHEBI:61723"/>
        <dbReference type="EC" id="2.7.7.3"/>
    </reaction>
</comment>
<comment type="cofactor">
    <cofactor evidence="1">
        <name>Mg(2+)</name>
        <dbReference type="ChEBI" id="CHEBI:18420"/>
    </cofactor>
</comment>
<comment type="pathway">
    <text evidence="1">Cofactor biosynthesis; coenzyme A biosynthesis; CoA from (R)-pantothenate: step 4/5.</text>
</comment>
<comment type="subunit">
    <text evidence="1">Homohexamer.</text>
</comment>
<comment type="subcellular location">
    <subcellularLocation>
        <location evidence="1">Cytoplasm</location>
    </subcellularLocation>
</comment>
<comment type="similarity">
    <text evidence="1">Belongs to the bacterial CoaD family.</text>
</comment>
<proteinExistence type="inferred from homology"/>
<dbReference type="EC" id="2.7.7.3" evidence="1"/>
<dbReference type="EMBL" id="AL766845">
    <property type="protein sequence ID" value="CAD46145.1"/>
    <property type="molecule type" value="Genomic_DNA"/>
</dbReference>
<dbReference type="RefSeq" id="WP_000161894.1">
    <property type="nucleotide sequence ID" value="NC_004368.1"/>
</dbReference>
<dbReference type="SMR" id="Q8E6R1"/>
<dbReference type="KEGG" id="san:gbs0501"/>
<dbReference type="eggNOG" id="COG0669">
    <property type="taxonomic scope" value="Bacteria"/>
</dbReference>
<dbReference type="HOGENOM" id="CLU_100149_0_1_9"/>
<dbReference type="UniPathway" id="UPA00241">
    <property type="reaction ID" value="UER00355"/>
</dbReference>
<dbReference type="Proteomes" id="UP000000823">
    <property type="component" value="Chromosome"/>
</dbReference>
<dbReference type="GO" id="GO:0005737">
    <property type="term" value="C:cytoplasm"/>
    <property type="evidence" value="ECO:0007669"/>
    <property type="project" value="UniProtKB-SubCell"/>
</dbReference>
<dbReference type="GO" id="GO:0005524">
    <property type="term" value="F:ATP binding"/>
    <property type="evidence" value="ECO:0007669"/>
    <property type="project" value="UniProtKB-KW"/>
</dbReference>
<dbReference type="GO" id="GO:0004595">
    <property type="term" value="F:pantetheine-phosphate adenylyltransferase activity"/>
    <property type="evidence" value="ECO:0007669"/>
    <property type="project" value="UniProtKB-UniRule"/>
</dbReference>
<dbReference type="GO" id="GO:0015937">
    <property type="term" value="P:coenzyme A biosynthetic process"/>
    <property type="evidence" value="ECO:0007669"/>
    <property type="project" value="UniProtKB-UniRule"/>
</dbReference>
<dbReference type="Gene3D" id="3.40.50.620">
    <property type="entry name" value="HUPs"/>
    <property type="match status" value="1"/>
</dbReference>
<dbReference type="HAMAP" id="MF_00151">
    <property type="entry name" value="PPAT_bact"/>
    <property type="match status" value="1"/>
</dbReference>
<dbReference type="InterPro" id="IPR004821">
    <property type="entry name" value="Cyt_trans-like"/>
</dbReference>
<dbReference type="InterPro" id="IPR001980">
    <property type="entry name" value="PPAT"/>
</dbReference>
<dbReference type="InterPro" id="IPR014729">
    <property type="entry name" value="Rossmann-like_a/b/a_fold"/>
</dbReference>
<dbReference type="NCBIfam" id="TIGR01510">
    <property type="entry name" value="coaD_prev_kdtB"/>
    <property type="match status" value="1"/>
</dbReference>
<dbReference type="NCBIfam" id="TIGR00125">
    <property type="entry name" value="cyt_tran_rel"/>
    <property type="match status" value="1"/>
</dbReference>
<dbReference type="PANTHER" id="PTHR21342">
    <property type="entry name" value="PHOSPHOPANTETHEINE ADENYLYLTRANSFERASE"/>
    <property type="match status" value="1"/>
</dbReference>
<dbReference type="PANTHER" id="PTHR21342:SF1">
    <property type="entry name" value="PHOSPHOPANTETHEINE ADENYLYLTRANSFERASE"/>
    <property type="match status" value="1"/>
</dbReference>
<dbReference type="Pfam" id="PF01467">
    <property type="entry name" value="CTP_transf_like"/>
    <property type="match status" value="1"/>
</dbReference>
<dbReference type="PRINTS" id="PR01020">
    <property type="entry name" value="LPSBIOSNTHSS"/>
</dbReference>
<dbReference type="SUPFAM" id="SSF52374">
    <property type="entry name" value="Nucleotidylyl transferase"/>
    <property type="match status" value="1"/>
</dbReference>
<reference key="1">
    <citation type="journal article" date="2002" name="Mol. Microbiol.">
        <title>Genome sequence of Streptococcus agalactiae, a pathogen causing invasive neonatal disease.</title>
        <authorList>
            <person name="Glaser P."/>
            <person name="Rusniok C."/>
            <person name="Buchrieser C."/>
            <person name="Chevalier F."/>
            <person name="Frangeul L."/>
            <person name="Msadek T."/>
            <person name="Zouine M."/>
            <person name="Couve E."/>
            <person name="Lalioui L."/>
            <person name="Poyart C."/>
            <person name="Trieu-Cuot P."/>
            <person name="Kunst F."/>
        </authorList>
    </citation>
    <scope>NUCLEOTIDE SEQUENCE [LARGE SCALE GENOMIC DNA]</scope>
    <source>
        <strain>NEM316</strain>
    </source>
</reference>
<organism>
    <name type="scientific">Streptococcus agalactiae serotype III (strain NEM316)</name>
    <dbReference type="NCBI Taxonomy" id="211110"/>
    <lineage>
        <taxon>Bacteria</taxon>
        <taxon>Bacillati</taxon>
        <taxon>Bacillota</taxon>
        <taxon>Bacilli</taxon>
        <taxon>Lactobacillales</taxon>
        <taxon>Streptococcaceae</taxon>
        <taxon>Streptococcus</taxon>
    </lineage>
</organism>
<sequence>MTKKALFTGSFDPVTNGHLDIIERASYLFDHVYIGLFYNLEKQGYFSIECRKKMLEEAIRQFKNVSVLVAQDRLAVDLAREVGAKYFVRGLRNSQDFDYEANLEFFNKQLADDIETVYLSTSPSLSPISSSRIRELIYFKASVKPFVPKSVVREVEKMSEE</sequence>
<gene>
    <name evidence="1" type="primary">coaD</name>
    <name type="ordered locus">gbs0501</name>
</gene>
<protein>
    <recommendedName>
        <fullName evidence="1">Phosphopantetheine adenylyltransferase</fullName>
        <ecNumber evidence="1">2.7.7.3</ecNumber>
    </recommendedName>
    <alternativeName>
        <fullName evidence="1">Dephospho-CoA pyrophosphorylase</fullName>
    </alternativeName>
    <alternativeName>
        <fullName evidence="1">Pantetheine-phosphate adenylyltransferase</fullName>
        <shortName evidence="1">PPAT</shortName>
    </alternativeName>
</protein>